<name>GLKA_THELN</name>
<gene>
    <name evidence="1" type="primary">glkA</name>
    <name type="ORF">OCC_09701</name>
</gene>
<accession>Q7M537</accession>
<accession>H3ZQW1</accession>
<accession>Q7SIF2</accession>
<proteinExistence type="evidence at protein level"/>
<comment type="function">
    <text evidence="2 5">Catalyzes the ADP-dependent phosphorylation of D-glucose to D-glucose 6-phosphate and glucosamine to glucosamine 6-phosphate (PubMed:11098152, PubMed:23818958). Can also use CDP as the phosphoryl group donor and D-1,5-anhydroglucitol as the phosphoryl group acceptor (PubMed:11098152).</text>
</comment>
<comment type="catalytic activity">
    <reaction evidence="1 2 5">
        <text>D-glucose + ADP = D-glucose 6-phosphate + AMP + H(+)</text>
        <dbReference type="Rhea" id="RHEA:11460"/>
        <dbReference type="ChEBI" id="CHEBI:4167"/>
        <dbReference type="ChEBI" id="CHEBI:15378"/>
        <dbReference type="ChEBI" id="CHEBI:61548"/>
        <dbReference type="ChEBI" id="CHEBI:456215"/>
        <dbReference type="ChEBI" id="CHEBI:456216"/>
        <dbReference type="EC" id="2.7.1.147"/>
    </reaction>
</comment>
<comment type="catalytic activity">
    <reaction evidence="1 2">
        <text>D-glucosamine + ADP = D-glucosamine 6-phosphate + AMP + H(+)</text>
        <dbReference type="Rhea" id="RHEA:62084"/>
        <dbReference type="ChEBI" id="CHEBI:15378"/>
        <dbReference type="ChEBI" id="CHEBI:58723"/>
        <dbReference type="ChEBI" id="CHEBI:58725"/>
        <dbReference type="ChEBI" id="CHEBI:456215"/>
        <dbReference type="ChEBI" id="CHEBI:456216"/>
    </reaction>
</comment>
<comment type="cofactor">
    <cofactor evidence="1 2">
        <name>Mg(2+)</name>
        <dbReference type="ChEBI" id="CHEBI:18420"/>
    </cofactor>
    <text evidence="1">Binds 1 Mg(2+) ion per subunit.</text>
</comment>
<comment type="biophysicochemical properties">
    <kinetics>
        <KM evidence="2">0.4 mM for D-glucose (at 37 degrees Celsius)</KM>
        <KM evidence="5">0.218 mM for D-glucose</KM>
        <KM evidence="2">1.9 mM for D-glucosamine (at 37 degrees Celsius)</KM>
        <KM evidence="2">2 mM for D-1,5-anhydroglucitol (at 37 degrees Celsius)</KM>
        <KM evidence="2">0.057 mM for ADP (at 37 degrees Celsius)</KM>
        <KM evidence="5">0.0086 mM for Mg-ADP</KM>
        <KM evidence="2">0.56 mM for CDP (at 37 degrees Celsius)</KM>
        <KM evidence="2">0.037 mM for magnesium ions (at 37 degrees Celsius)</KM>
        <Vmax evidence="2">73.0 umol/min/mg enzyme with glucose and ADP as substrates (at 37 degrees Celsius)</Vmax>
    </kinetics>
    <phDependence>
        <text evidence="2">Optimum pH is about 7.5.</text>
    </phDependence>
    <temperatureDependence>
        <text evidence="2">Optimum temperature may be above 100 degrees Celsius. Activity observed at 100 degrees Celsius is about 8 times that at 37 degrees Celsius. Thermostable up to 95 degrees Celsius. Retains full activity after heating at 90 degrees Celsius for 10 minutes and more than 95% of the full activity at 100 degrees Celsius for 10 min.</text>
    </temperatureDependence>
</comment>
<comment type="pathway">
    <text evidence="1">Carbohydrate degradation; glycolysis.</text>
</comment>
<comment type="subunit">
    <text evidence="2 3">Monomer.</text>
</comment>
<comment type="subcellular location">
    <subcellularLocation>
        <location evidence="1">Cytoplasm</location>
    </subcellularLocation>
</comment>
<comment type="similarity">
    <text evidence="1 7">Belongs to the ADP-dependent glucokinase family.</text>
</comment>
<protein>
    <recommendedName>
        <fullName evidence="1 7">ADP-dependent glucose/glucosamine kinase</fullName>
        <ecNumber evidence="2">2.7.1.-</ecNumber>
        <ecNumber evidence="1 2 5">2.7.1.147</ecNumber>
    </recommendedName>
    <alternativeName>
        <fullName evidence="1 6">ADP-dependent glucokinase</fullName>
        <shortName evidence="1 6">ADP-GK</shortName>
        <shortName evidence="1">ADPGK</shortName>
    </alternativeName>
    <alternativeName>
        <fullName evidence="1">Glucosamine kinase</fullName>
        <shortName evidence="1">GlcN kinase</shortName>
    </alternativeName>
</protein>
<dbReference type="EC" id="2.7.1.-" evidence="2"/>
<dbReference type="EC" id="2.7.1.147" evidence="1 2 5"/>
<dbReference type="EMBL" id="E14589">
    <property type="status" value="NOT_ANNOTATED_CDS"/>
    <property type="molecule type" value="Unassigned_DNA"/>
</dbReference>
<dbReference type="EMBL" id="CP006670">
    <property type="protein sequence ID" value="EHR77687.1"/>
    <property type="molecule type" value="Genomic_DNA"/>
</dbReference>
<dbReference type="PIR" id="JC7551">
    <property type="entry name" value="JC7551"/>
</dbReference>
<dbReference type="PDB" id="1GC5">
    <property type="method" value="X-ray"/>
    <property type="resolution" value="2.30 A"/>
    <property type="chains" value="A=1-467"/>
</dbReference>
<dbReference type="PDB" id="4B8R">
    <property type="method" value="X-ray"/>
    <property type="resolution" value="2.05 A"/>
    <property type="chains" value="A=1-467"/>
</dbReference>
<dbReference type="PDB" id="4B8S">
    <property type="method" value="X-ray"/>
    <property type="resolution" value="2.58 A"/>
    <property type="chains" value="A=1-467"/>
</dbReference>
<dbReference type="PDBsum" id="1GC5"/>
<dbReference type="PDBsum" id="4B8R"/>
<dbReference type="PDBsum" id="4B8S"/>
<dbReference type="SMR" id="Q7M537"/>
<dbReference type="STRING" id="523849.OCC_09701"/>
<dbReference type="PaxDb" id="523849-OCC_09701"/>
<dbReference type="KEGG" id="tlt:OCC_09701"/>
<dbReference type="HOGENOM" id="CLU_046643_0_0_2"/>
<dbReference type="BRENDA" id="2.7.1.147">
    <property type="organism ID" value="6302"/>
</dbReference>
<dbReference type="UniPathway" id="UPA00109"/>
<dbReference type="EvolutionaryTrace" id="Q7M537"/>
<dbReference type="Proteomes" id="UP000015502">
    <property type="component" value="Chromosome"/>
</dbReference>
<dbReference type="GO" id="GO:0005737">
    <property type="term" value="C:cytoplasm"/>
    <property type="evidence" value="ECO:0007669"/>
    <property type="project" value="UniProtKB-SubCell"/>
</dbReference>
<dbReference type="GO" id="GO:0043843">
    <property type="term" value="F:ADP-specific glucokinase activity"/>
    <property type="evidence" value="ECO:0007669"/>
    <property type="project" value="UniProtKB-EC"/>
</dbReference>
<dbReference type="GO" id="GO:0004340">
    <property type="term" value="F:glucokinase activity"/>
    <property type="evidence" value="ECO:0007669"/>
    <property type="project" value="UniProtKB-UniRule"/>
</dbReference>
<dbReference type="GO" id="GO:0000287">
    <property type="term" value="F:magnesium ion binding"/>
    <property type="evidence" value="ECO:0007669"/>
    <property type="project" value="InterPro"/>
</dbReference>
<dbReference type="GO" id="GO:0006006">
    <property type="term" value="P:glucose metabolic process"/>
    <property type="evidence" value="ECO:0007669"/>
    <property type="project" value="UniProtKB-KW"/>
</dbReference>
<dbReference type="GO" id="GO:0006096">
    <property type="term" value="P:glycolytic process"/>
    <property type="evidence" value="ECO:0007669"/>
    <property type="project" value="UniProtKB-UniRule"/>
</dbReference>
<dbReference type="CDD" id="cd01938">
    <property type="entry name" value="ADPGK_ADPPFK"/>
    <property type="match status" value="1"/>
</dbReference>
<dbReference type="Gene3D" id="3.30.1110.20">
    <property type="match status" value="1"/>
</dbReference>
<dbReference type="Gene3D" id="3.40.1190.20">
    <property type="match status" value="1"/>
</dbReference>
<dbReference type="HAMAP" id="MF_00809">
    <property type="entry name" value="ADP_glucokinase"/>
    <property type="match status" value="1"/>
</dbReference>
<dbReference type="InterPro" id="IPR007666">
    <property type="entry name" value="ADP_PFK/GK"/>
</dbReference>
<dbReference type="InterPro" id="IPR015990">
    <property type="entry name" value="ADP_PFK/GK_arc"/>
</dbReference>
<dbReference type="InterPro" id="IPR031299">
    <property type="entry name" value="GlkA"/>
</dbReference>
<dbReference type="InterPro" id="IPR029056">
    <property type="entry name" value="Ribokinase-like"/>
</dbReference>
<dbReference type="NCBIfam" id="NF010641">
    <property type="entry name" value="PRK14038.1"/>
    <property type="match status" value="1"/>
</dbReference>
<dbReference type="PANTHER" id="PTHR21208">
    <property type="entry name" value="ADP-DEPENDENT GLUCOKINASE"/>
    <property type="match status" value="1"/>
</dbReference>
<dbReference type="PANTHER" id="PTHR21208:SF1">
    <property type="entry name" value="ADP-DEPENDENT GLUCOKINASE"/>
    <property type="match status" value="1"/>
</dbReference>
<dbReference type="Pfam" id="PF04587">
    <property type="entry name" value="ADP_PFK_GK"/>
    <property type="match status" value="1"/>
</dbReference>
<dbReference type="PIRSF" id="PIRSF015883">
    <property type="entry name" value="ADP-Pfk_glckin"/>
    <property type="match status" value="1"/>
</dbReference>
<dbReference type="SUPFAM" id="SSF53613">
    <property type="entry name" value="Ribokinase-like"/>
    <property type="match status" value="1"/>
</dbReference>
<dbReference type="PROSITE" id="PS51255">
    <property type="entry name" value="ADPK"/>
    <property type="match status" value="1"/>
</dbReference>
<evidence type="ECO:0000255" key="1">
    <source>
        <dbReference type="HAMAP-Rule" id="MF_00809"/>
    </source>
</evidence>
<evidence type="ECO:0000269" key="2">
    <source>
    </source>
</evidence>
<evidence type="ECO:0000269" key="3">
    <source>
    </source>
</evidence>
<evidence type="ECO:0000269" key="4">
    <source>
    </source>
</evidence>
<evidence type="ECO:0000269" key="5">
    <source>
    </source>
</evidence>
<evidence type="ECO:0000303" key="6">
    <source>
    </source>
</evidence>
<evidence type="ECO:0000305" key="7"/>
<evidence type="ECO:0007744" key="8">
    <source>
        <dbReference type="PDB" id="1GC5"/>
    </source>
</evidence>
<evidence type="ECO:0007744" key="9">
    <source>
        <dbReference type="PDB" id="4B8R"/>
    </source>
</evidence>
<evidence type="ECO:0007744" key="10">
    <source>
        <dbReference type="PDB" id="4B8S"/>
    </source>
</evidence>
<evidence type="ECO:0007829" key="11">
    <source>
        <dbReference type="PDB" id="4B8R"/>
    </source>
</evidence>
<organism>
    <name type="scientific">Thermococcus litoralis (strain ATCC 51850 / DSM 5473 / JCM 8560 / NS-C)</name>
    <dbReference type="NCBI Taxonomy" id="523849"/>
    <lineage>
        <taxon>Archaea</taxon>
        <taxon>Methanobacteriati</taxon>
        <taxon>Methanobacteriota</taxon>
        <taxon>Thermococci</taxon>
        <taxon>Thermococcales</taxon>
        <taxon>Thermococcaceae</taxon>
        <taxon>Thermococcus</taxon>
    </lineage>
</organism>
<feature type="chain" id="PRO_0000184775" description="ADP-dependent glucose/glucosamine kinase">
    <location>
        <begin position="1"/>
        <end position="467"/>
    </location>
</feature>
<feature type="domain" description="ADPK" evidence="1">
    <location>
        <begin position="10"/>
        <end position="467"/>
    </location>
</feature>
<feature type="active site" description="Proton acceptor" evidence="1">
    <location>
        <position position="451"/>
    </location>
</feature>
<feature type="binding site" evidence="1 5 10">
    <location>
        <position position="42"/>
    </location>
    <ligand>
        <name>D-glucose</name>
        <dbReference type="ChEBI" id="CHEBI:4167"/>
    </ligand>
</feature>
<feature type="binding site" evidence="1">
    <location>
        <position position="96"/>
    </location>
    <ligand>
        <name>D-glucose</name>
        <dbReference type="ChEBI" id="CHEBI:4167"/>
    </ligand>
</feature>
<feature type="binding site" evidence="1">
    <location>
        <begin position="120"/>
        <end position="121"/>
    </location>
    <ligand>
        <name>D-glucose</name>
        <dbReference type="ChEBI" id="CHEBI:4167"/>
    </ligand>
</feature>
<feature type="binding site" evidence="5 10">
    <location>
        <position position="120"/>
    </location>
    <ligand>
        <name>D-glucose</name>
        <dbReference type="ChEBI" id="CHEBI:4167"/>
    </ligand>
</feature>
<feature type="binding site" evidence="1 5 10">
    <location>
        <position position="184"/>
    </location>
    <ligand>
        <name>D-glucose</name>
        <dbReference type="ChEBI" id="CHEBI:4167"/>
    </ligand>
</feature>
<feature type="binding site" evidence="5 10">
    <location>
        <position position="211"/>
    </location>
    <ligand>
        <name>D-glucose</name>
        <dbReference type="ChEBI" id="CHEBI:4167"/>
    </ligand>
</feature>
<feature type="binding site" evidence="1">
    <location>
        <position position="279"/>
    </location>
    <ligand>
        <name>Mg(2+)</name>
        <dbReference type="ChEBI" id="CHEBI:18420"/>
    </ligand>
</feature>
<feature type="binding site" evidence="1 3 5 8 10">
    <location>
        <position position="305"/>
    </location>
    <ligand>
        <name>ADP</name>
        <dbReference type="ChEBI" id="CHEBI:456216"/>
    </ligand>
</feature>
<feature type="binding site" evidence="1">
    <location>
        <position position="308"/>
    </location>
    <ligand>
        <name>Mg(2+)</name>
        <dbReference type="ChEBI" id="CHEBI:18420"/>
    </ligand>
</feature>
<feature type="binding site" evidence="1 3 5 8 10">
    <location>
        <begin position="352"/>
        <end position="353"/>
    </location>
    <ligand>
        <name>ADP</name>
        <dbReference type="ChEBI" id="CHEBI:456216"/>
    </ligand>
</feature>
<feature type="binding site" evidence="1 3 5 8 10">
    <location>
        <position position="440"/>
    </location>
    <ligand>
        <name>ADP</name>
        <dbReference type="ChEBI" id="CHEBI:456216"/>
    </ligand>
</feature>
<feature type="binding site" evidence="1">
    <location>
        <position position="450"/>
    </location>
    <ligand>
        <name>ADP</name>
        <dbReference type="ChEBI" id="CHEBI:456216"/>
    </ligand>
</feature>
<feature type="binding site" evidence="1 5 10">
    <location>
        <position position="451"/>
    </location>
    <ligand>
        <name>D-glucose</name>
        <dbReference type="ChEBI" id="CHEBI:4167"/>
    </ligand>
</feature>
<feature type="binding site" evidence="1">
    <location>
        <position position="451"/>
    </location>
    <ligand>
        <name>Mg(2+)</name>
        <dbReference type="ChEBI" id="CHEBI:18420"/>
    </ligand>
</feature>
<feature type="mutagenesis site" description="Complete loss of activity." evidence="4">
    <original>D</original>
    <variation>A</variation>
    <variation>N</variation>
    <variation>S</variation>
    <location>
        <position position="451"/>
    </location>
</feature>
<feature type="helix" evidence="11">
    <location>
        <begin position="5"/>
        <end position="26"/>
    </location>
</feature>
<feature type="helix" evidence="11">
    <location>
        <begin position="27"/>
        <end position="29"/>
    </location>
</feature>
<feature type="strand" evidence="11">
    <location>
        <begin position="33"/>
        <end position="37"/>
    </location>
</feature>
<feature type="strand" evidence="11">
    <location>
        <begin position="40"/>
        <end position="46"/>
    </location>
</feature>
<feature type="helix" evidence="11">
    <location>
        <begin position="49"/>
        <end position="59"/>
    </location>
</feature>
<feature type="helix" evidence="11">
    <location>
        <begin position="61"/>
        <end position="69"/>
    </location>
</feature>
<feature type="strand" evidence="11">
    <location>
        <begin position="73"/>
        <end position="75"/>
    </location>
</feature>
<feature type="helix" evidence="11">
    <location>
        <begin position="78"/>
        <end position="91"/>
    </location>
</feature>
<feature type="strand" evidence="11">
    <location>
        <begin position="95"/>
        <end position="99"/>
    </location>
</feature>
<feature type="helix" evidence="11">
    <location>
        <begin position="102"/>
        <end position="111"/>
    </location>
</feature>
<feature type="strand" evidence="11">
    <location>
        <begin position="114"/>
        <end position="120"/>
    </location>
</feature>
<feature type="helix" evidence="11">
    <location>
        <begin position="121"/>
        <end position="129"/>
    </location>
</feature>
<feature type="turn" evidence="11">
    <location>
        <begin position="130"/>
        <end position="132"/>
    </location>
</feature>
<feature type="strand" evidence="11">
    <location>
        <begin position="137"/>
        <end position="139"/>
    </location>
</feature>
<feature type="helix" evidence="11">
    <location>
        <begin position="146"/>
        <end position="149"/>
    </location>
</feature>
<feature type="strand" evidence="11">
    <location>
        <begin position="154"/>
        <end position="163"/>
    </location>
</feature>
<feature type="strand" evidence="11">
    <location>
        <begin position="166"/>
        <end position="170"/>
    </location>
</feature>
<feature type="helix" evidence="11">
    <location>
        <begin position="172"/>
        <end position="175"/>
    </location>
</feature>
<feature type="strand" evidence="11">
    <location>
        <begin position="183"/>
        <end position="189"/>
    </location>
</feature>
<feature type="strand" evidence="11">
    <location>
        <begin position="204"/>
        <end position="210"/>
    </location>
</feature>
<feature type="turn" evidence="11">
    <location>
        <begin position="212"/>
        <end position="217"/>
    </location>
</feature>
<feature type="helix" evidence="11">
    <location>
        <begin position="221"/>
        <end position="225"/>
    </location>
</feature>
<feature type="helix" evidence="11">
    <location>
        <begin position="227"/>
        <end position="231"/>
    </location>
</feature>
<feature type="strand" evidence="11">
    <location>
        <begin position="235"/>
        <end position="239"/>
    </location>
</feature>
<feature type="helix" evidence="11">
    <location>
        <begin position="242"/>
        <end position="244"/>
    </location>
</feature>
<feature type="helix" evidence="11">
    <location>
        <begin position="256"/>
        <end position="271"/>
    </location>
</feature>
<feature type="strand" evidence="11">
    <location>
        <begin position="275"/>
        <end position="279"/>
    </location>
</feature>
<feature type="helix" evidence="11">
    <location>
        <begin position="286"/>
        <end position="293"/>
    </location>
</feature>
<feature type="helix" evidence="11">
    <location>
        <begin position="294"/>
        <end position="298"/>
    </location>
</feature>
<feature type="strand" evidence="11">
    <location>
        <begin position="300"/>
        <end position="304"/>
    </location>
</feature>
<feature type="helix" evidence="11">
    <location>
        <begin position="306"/>
        <end position="316"/>
    </location>
</feature>
<feature type="helix" evidence="11">
    <location>
        <begin position="319"/>
        <end position="326"/>
    </location>
</feature>
<feature type="helix" evidence="11">
    <location>
        <begin position="330"/>
        <end position="344"/>
    </location>
</feature>
<feature type="strand" evidence="11">
    <location>
        <begin position="347"/>
        <end position="352"/>
    </location>
</feature>
<feature type="strand" evidence="11">
    <location>
        <begin position="354"/>
        <end position="363"/>
    </location>
</feature>
<feature type="helix" evidence="11">
    <location>
        <begin position="367"/>
        <end position="385"/>
    </location>
</feature>
<feature type="helix" evidence="11">
    <location>
        <begin position="391"/>
        <end position="399"/>
    </location>
</feature>
<feature type="helix" evidence="11">
    <location>
        <begin position="404"/>
        <end position="416"/>
    </location>
</feature>
<feature type="strand" evidence="11">
    <location>
        <begin position="419"/>
        <end position="421"/>
    </location>
</feature>
<feature type="strand" evidence="11">
    <location>
        <begin position="424"/>
        <end position="426"/>
    </location>
</feature>
<feature type="strand" evidence="11">
    <location>
        <begin position="431"/>
        <end position="436"/>
    </location>
</feature>
<feature type="helix" evidence="11">
    <location>
        <begin position="449"/>
        <end position="465"/>
    </location>
</feature>
<sequence length="467" mass="53621">MKESLKDRIRLWKRLYVNAFENALNAIPNVKGVLLAYNTNIDAIKYLDKDDLEKRVTEIGKEKVFEIIENPPEKISSIEELLGGILRSIKLGKAMEWFVESEEVRRYLREWGWDELRIGGQAGIMANLLGGVYRIPTIVHVPQNPKLQAELFVDGPIYVPVFEGNKLKLVHPKDAIAEEEELIHYIYEFPRGFQVFDVQAPRENRFIANADDYNARVYMRREFREGFEEITRNVELAIISGLQVLKEYYPDGTTYRDVLDRVESHLNILNRYNVKSHFEFAYTANRRVREALVELLPKFTSVGLNEVELASIMEIIGDEELAKEVLEGHIFSVIDAMNVLMDETGIERIHFHTYGYYLALTQYRGEEVRDALLFASLAAAAKAMKGNLERIEQIRDALSVPTNERAIVLEEELEKEFTEFENGLIDMVDRQLAFVPTKIVASPKSTVGIGDTISSSAFVSEFGMRKR</sequence>
<keyword id="KW-0002">3D-structure</keyword>
<keyword id="KW-0119">Carbohydrate metabolism</keyword>
<keyword id="KW-0963">Cytoplasm</keyword>
<keyword id="KW-0313">Glucose metabolism</keyword>
<keyword id="KW-0324">Glycolysis</keyword>
<keyword id="KW-0418">Kinase</keyword>
<keyword id="KW-0460">Magnesium</keyword>
<keyword id="KW-0479">Metal-binding</keyword>
<keyword id="KW-0808">Transferase</keyword>
<reference key="1">
    <citation type="journal article" date="2000" name="J. Biochem.">
        <title>Biochemical characterization, cloning, and sequencing of ADP-dependent (AMP-forming) glucokinase from two hyperthermophilic archaea, Pyrococcus furiosus and Thermococcus litoralis.</title>
        <authorList>
            <person name="Koga S."/>
            <person name="Yoshioka I."/>
            <person name="Sakuraba H."/>
            <person name="Takahashi M."/>
            <person name="Sakasegawa S."/>
            <person name="Shimizu S."/>
            <person name="Ohshima T."/>
        </authorList>
    </citation>
    <scope>NUCLEOTIDE SEQUENCE [GENOMIC DNA]</scope>
    <scope>FUNCTION</scope>
    <scope>CATALYTIC ACTIVITY</scope>
    <scope>COFACTOR</scope>
    <scope>BIOPHYSICOCHEMICAL PROPERTIES</scope>
    <scope>SUBUNIT</scope>
    <source>
        <strain>ATCC 51850 / DSM 5473 / JCM 8560 / NS-C</strain>
    </source>
</reference>
<reference key="2">
    <citation type="journal article" date="2012" name="J. Bacteriol.">
        <title>Genome sequence of the model hyperthermophilic archaeon Thermococcus litoralis NS-C.</title>
        <authorList>
            <person name="Gardner A.F."/>
            <person name="Kumar S."/>
            <person name="Perler F.B."/>
        </authorList>
    </citation>
    <scope>NUCLEOTIDE SEQUENCE [LARGE SCALE GENOMIC DNA]</scope>
    <source>
        <strain>ATCC 51850 / DSM 5473 / JCM 8560 / NS-C</strain>
    </source>
</reference>
<reference key="3">
    <citation type="journal article" date="2003" name="J. Mol. Biol.">
        <title>Crystal structure of an ADP-dependent glucokinase from Pyrococcus furiosus: implications for a sugar-induced conformational change in ADP-dependent kinase.</title>
        <authorList>
            <person name="Ito S."/>
            <person name="Fushinobu S."/>
            <person name="Jeong J.-J."/>
            <person name="Yoshioka I."/>
            <person name="Koga S."/>
            <person name="Shoun H."/>
            <person name="Wakagi T."/>
        </authorList>
    </citation>
    <scope>MUTAGENESIS OF ASP-451</scope>
</reference>
<reference evidence="8" key="4">
    <citation type="journal article" date="2001" name="Structure">
        <title>Structural basis for the ADP-specificity of a novel glucokinase from a hyperthermophilic archaeon.</title>
        <authorList>
            <person name="Ito S."/>
            <person name="Fushinobu S."/>
            <person name="Yoshioka I."/>
            <person name="Koga S."/>
            <person name="Matsuzawa H."/>
            <person name="Wakagi T."/>
        </authorList>
    </citation>
    <scope>X-RAY CRYSTALLOGRAPHY (2.3 ANGSTROMS) IN COMPLEX WITH ADP</scope>
    <scope>SUBUNIT</scope>
</reference>
<reference evidence="9 10" key="5">
    <citation type="journal article" date="2013" name="PLoS ONE">
        <title>Crystal structure, SAXS and kinetic mechanism of hyperthermophilic ADP-dependent glucokinase from Thermococcus litoralis reveal a conserved mechanism for catalysis.</title>
        <authorList>
            <person name="Rivas-Pardo J.A."/>
            <person name="Herrera-Morande A."/>
            <person name="Castro-Fernandez V."/>
            <person name="Fernandez F.J."/>
            <person name="Vega M.C."/>
            <person name="Guixe V."/>
        </authorList>
    </citation>
    <scope>X-RAY CRYSTALLOGRAPHY (2.05 ANGSTROMS) OF APOENZYME AND IN COMPLEX WITH AMP AND GLUCOSE</scope>
    <scope>FUNCTION</scope>
    <scope>CATALYTIC ACTIVITY</scope>
    <scope>BIOPHYSICOCHEMICAL PROPERTIES</scope>
</reference>